<comment type="function">
    <text evidence="2">GTP hydrolase that promotes the GTP-dependent binding of aminoacyl-tRNA to the A-site of ribosomes during protein biosynthesis.</text>
</comment>
<comment type="catalytic activity">
    <reaction evidence="2">
        <text>GTP + H2O = GDP + phosphate + H(+)</text>
        <dbReference type="Rhea" id="RHEA:19669"/>
        <dbReference type="ChEBI" id="CHEBI:15377"/>
        <dbReference type="ChEBI" id="CHEBI:15378"/>
        <dbReference type="ChEBI" id="CHEBI:37565"/>
        <dbReference type="ChEBI" id="CHEBI:43474"/>
        <dbReference type="ChEBI" id="CHEBI:58189"/>
        <dbReference type="EC" id="3.6.5.3"/>
    </reaction>
    <physiologicalReaction direction="left-to-right" evidence="2">
        <dbReference type="Rhea" id="RHEA:19670"/>
    </physiologicalReaction>
</comment>
<comment type="subunit">
    <text evidence="2">Monomer.</text>
</comment>
<comment type="subcellular location">
    <subcellularLocation>
        <location evidence="2">Cytoplasm</location>
    </subcellularLocation>
</comment>
<comment type="similarity">
    <text evidence="2">Belongs to the TRAFAC class translation factor GTPase superfamily. Classic translation factor GTPase family. EF-Tu/EF-1A subfamily.</text>
</comment>
<proteinExistence type="inferred from homology"/>
<dbReference type="EC" id="3.6.5.3" evidence="2"/>
<dbReference type="EMBL" id="AP006861">
    <property type="protein sequence ID" value="BAE81085.1"/>
    <property type="molecule type" value="Genomic_DNA"/>
</dbReference>
<dbReference type="RefSeq" id="WP_011457865.1">
    <property type="nucleotide sequence ID" value="NC_007899.1"/>
</dbReference>
<dbReference type="SMR" id="Q255F3"/>
<dbReference type="STRING" id="264202.CF0313"/>
<dbReference type="KEGG" id="cfe:CF0313"/>
<dbReference type="eggNOG" id="COG0050">
    <property type="taxonomic scope" value="Bacteria"/>
</dbReference>
<dbReference type="HOGENOM" id="CLU_007265_0_1_0"/>
<dbReference type="OrthoDB" id="9804504at2"/>
<dbReference type="Proteomes" id="UP000001260">
    <property type="component" value="Chromosome"/>
</dbReference>
<dbReference type="GO" id="GO:0005829">
    <property type="term" value="C:cytosol"/>
    <property type="evidence" value="ECO:0007669"/>
    <property type="project" value="TreeGrafter"/>
</dbReference>
<dbReference type="GO" id="GO:0005525">
    <property type="term" value="F:GTP binding"/>
    <property type="evidence" value="ECO:0007669"/>
    <property type="project" value="UniProtKB-UniRule"/>
</dbReference>
<dbReference type="GO" id="GO:0003924">
    <property type="term" value="F:GTPase activity"/>
    <property type="evidence" value="ECO:0007669"/>
    <property type="project" value="InterPro"/>
</dbReference>
<dbReference type="GO" id="GO:0003746">
    <property type="term" value="F:translation elongation factor activity"/>
    <property type="evidence" value="ECO:0007669"/>
    <property type="project" value="UniProtKB-UniRule"/>
</dbReference>
<dbReference type="CDD" id="cd01884">
    <property type="entry name" value="EF_Tu"/>
    <property type="match status" value="1"/>
</dbReference>
<dbReference type="CDD" id="cd03697">
    <property type="entry name" value="EFTU_II"/>
    <property type="match status" value="1"/>
</dbReference>
<dbReference type="CDD" id="cd03707">
    <property type="entry name" value="EFTU_III"/>
    <property type="match status" value="1"/>
</dbReference>
<dbReference type="FunFam" id="2.40.30.10:FF:000002">
    <property type="entry name" value="Elongation factor Tu"/>
    <property type="match status" value="1"/>
</dbReference>
<dbReference type="FunFam" id="3.40.50.300:FF:000003">
    <property type="entry name" value="Elongation factor Tu"/>
    <property type="match status" value="1"/>
</dbReference>
<dbReference type="FunFam" id="2.40.30.10:FF:000020">
    <property type="entry name" value="Translation elongation factor EF-1"/>
    <property type="match status" value="1"/>
</dbReference>
<dbReference type="Gene3D" id="3.40.50.300">
    <property type="entry name" value="P-loop containing nucleotide triphosphate hydrolases"/>
    <property type="match status" value="1"/>
</dbReference>
<dbReference type="Gene3D" id="2.40.30.10">
    <property type="entry name" value="Translation factors"/>
    <property type="match status" value="2"/>
</dbReference>
<dbReference type="HAMAP" id="MF_00118_B">
    <property type="entry name" value="EF_Tu_B"/>
    <property type="match status" value="1"/>
</dbReference>
<dbReference type="InterPro" id="IPR041709">
    <property type="entry name" value="EF-Tu_GTP-bd"/>
</dbReference>
<dbReference type="InterPro" id="IPR050055">
    <property type="entry name" value="EF-Tu_GTPase"/>
</dbReference>
<dbReference type="InterPro" id="IPR004161">
    <property type="entry name" value="EFTu-like_2"/>
</dbReference>
<dbReference type="InterPro" id="IPR033720">
    <property type="entry name" value="EFTU_2"/>
</dbReference>
<dbReference type="InterPro" id="IPR031157">
    <property type="entry name" value="G_TR_CS"/>
</dbReference>
<dbReference type="InterPro" id="IPR027417">
    <property type="entry name" value="P-loop_NTPase"/>
</dbReference>
<dbReference type="InterPro" id="IPR005225">
    <property type="entry name" value="Small_GTP-bd"/>
</dbReference>
<dbReference type="InterPro" id="IPR000795">
    <property type="entry name" value="T_Tr_GTP-bd_dom"/>
</dbReference>
<dbReference type="InterPro" id="IPR009000">
    <property type="entry name" value="Transl_B-barrel_sf"/>
</dbReference>
<dbReference type="InterPro" id="IPR009001">
    <property type="entry name" value="Transl_elong_EF1A/Init_IF2_C"/>
</dbReference>
<dbReference type="InterPro" id="IPR004541">
    <property type="entry name" value="Transl_elong_EFTu/EF1A_bac/org"/>
</dbReference>
<dbReference type="InterPro" id="IPR004160">
    <property type="entry name" value="Transl_elong_EFTu/EF1A_C"/>
</dbReference>
<dbReference type="NCBIfam" id="TIGR00485">
    <property type="entry name" value="EF-Tu"/>
    <property type="match status" value="1"/>
</dbReference>
<dbReference type="NCBIfam" id="NF000766">
    <property type="entry name" value="PRK00049.1"/>
    <property type="match status" value="1"/>
</dbReference>
<dbReference type="NCBIfam" id="NF009372">
    <property type="entry name" value="PRK12735.1"/>
    <property type="match status" value="1"/>
</dbReference>
<dbReference type="NCBIfam" id="NF009373">
    <property type="entry name" value="PRK12736.1"/>
    <property type="match status" value="1"/>
</dbReference>
<dbReference type="NCBIfam" id="TIGR00231">
    <property type="entry name" value="small_GTP"/>
    <property type="match status" value="1"/>
</dbReference>
<dbReference type="PANTHER" id="PTHR43721:SF22">
    <property type="entry name" value="ELONGATION FACTOR TU, MITOCHONDRIAL"/>
    <property type="match status" value="1"/>
</dbReference>
<dbReference type="PANTHER" id="PTHR43721">
    <property type="entry name" value="ELONGATION FACTOR TU-RELATED"/>
    <property type="match status" value="1"/>
</dbReference>
<dbReference type="Pfam" id="PF00009">
    <property type="entry name" value="GTP_EFTU"/>
    <property type="match status" value="1"/>
</dbReference>
<dbReference type="Pfam" id="PF03144">
    <property type="entry name" value="GTP_EFTU_D2"/>
    <property type="match status" value="1"/>
</dbReference>
<dbReference type="Pfam" id="PF03143">
    <property type="entry name" value="GTP_EFTU_D3"/>
    <property type="match status" value="1"/>
</dbReference>
<dbReference type="PRINTS" id="PR00315">
    <property type="entry name" value="ELONGATNFCT"/>
</dbReference>
<dbReference type="SUPFAM" id="SSF50465">
    <property type="entry name" value="EF-Tu/eEF-1alpha/eIF2-gamma C-terminal domain"/>
    <property type="match status" value="1"/>
</dbReference>
<dbReference type="SUPFAM" id="SSF52540">
    <property type="entry name" value="P-loop containing nucleoside triphosphate hydrolases"/>
    <property type="match status" value="1"/>
</dbReference>
<dbReference type="SUPFAM" id="SSF50447">
    <property type="entry name" value="Translation proteins"/>
    <property type="match status" value="1"/>
</dbReference>
<dbReference type="PROSITE" id="PS00301">
    <property type="entry name" value="G_TR_1"/>
    <property type="match status" value="1"/>
</dbReference>
<dbReference type="PROSITE" id="PS51722">
    <property type="entry name" value="G_TR_2"/>
    <property type="match status" value="1"/>
</dbReference>
<feature type="chain" id="PRO_1000015635" description="Elongation factor Tu">
    <location>
        <begin position="1"/>
        <end position="394"/>
    </location>
</feature>
<feature type="domain" description="tr-type G">
    <location>
        <begin position="10"/>
        <end position="204"/>
    </location>
</feature>
<feature type="region of interest" description="G1" evidence="1">
    <location>
        <begin position="19"/>
        <end position="26"/>
    </location>
</feature>
<feature type="region of interest" description="G2" evidence="1">
    <location>
        <begin position="60"/>
        <end position="64"/>
    </location>
</feature>
<feature type="region of interest" description="G3" evidence="1">
    <location>
        <begin position="81"/>
        <end position="84"/>
    </location>
</feature>
<feature type="region of interest" description="G4" evidence="1">
    <location>
        <begin position="136"/>
        <end position="139"/>
    </location>
</feature>
<feature type="region of interest" description="G5" evidence="1">
    <location>
        <begin position="174"/>
        <end position="176"/>
    </location>
</feature>
<feature type="binding site" evidence="2">
    <location>
        <begin position="19"/>
        <end position="26"/>
    </location>
    <ligand>
        <name>GTP</name>
        <dbReference type="ChEBI" id="CHEBI:37565"/>
    </ligand>
</feature>
<feature type="binding site" evidence="2">
    <location>
        <position position="26"/>
    </location>
    <ligand>
        <name>Mg(2+)</name>
        <dbReference type="ChEBI" id="CHEBI:18420"/>
    </ligand>
</feature>
<feature type="binding site" evidence="2">
    <location>
        <begin position="81"/>
        <end position="85"/>
    </location>
    <ligand>
        <name>GTP</name>
        <dbReference type="ChEBI" id="CHEBI:37565"/>
    </ligand>
</feature>
<feature type="binding site" evidence="2">
    <location>
        <begin position="136"/>
        <end position="139"/>
    </location>
    <ligand>
        <name>GTP</name>
        <dbReference type="ChEBI" id="CHEBI:37565"/>
    </ligand>
</feature>
<name>EFTU_CHLFF</name>
<protein>
    <recommendedName>
        <fullName evidence="2">Elongation factor Tu</fullName>
        <shortName evidence="2">EF-Tu</shortName>
        <ecNumber evidence="2">3.6.5.3</ecNumber>
    </recommendedName>
</protein>
<sequence>MSKETFQRNKPHINIGTIGHVDHGKTTLTAAITRALSAEGLANFCDYSSIDNTPEEKARGITINASHVEYETPNRHYAHVDCPGHADYVKNMITGAAQMDGAILVVSATDGAMPQTKEHILLARQVGVPYIVVFLNKIDMISQEDAELVDLVEMELSELLEEKGYKGCPIIRGSALKALEGDASYVEKIRELMQAVDDNIPTPEREIDKPFLMPIEDVFSISGRGTVVTGRIERGVVKVGDKVQIVGLRDTRESIVTGVEMFRKELPEGQAGENVGLLLRGIGKNDVERGMVICQPNSVKSHTQFKGAVYILQKEEGGRHKPFFTGYRPQFFFRTTDVTGIVNLPEGTEMVMPGDNVEIDVQLISPVALEEGMRFAIREGGRTIGAGTISKIIA</sequence>
<gene>
    <name evidence="2" type="primary">tuf</name>
    <name type="ordered locus">CF0313</name>
</gene>
<reference key="1">
    <citation type="journal article" date="2006" name="DNA Res.">
        <title>Genome sequence of the cat pathogen, Chlamydophila felis.</title>
        <authorList>
            <person name="Azuma Y."/>
            <person name="Hirakawa H."/>
            <person name="Yamashita A."/>
            <person name="Cai Y."/>
            <person name="Rahman M.A."/>
            <person name="Suzuki H."/>
            <person name="Mitaku S."/>
            <person name="Toh H."/>
            <person name="Goto S."/>
            <person name="Murakami T."/>
            <person name="Sugi K."/>
            <person name="Hayashi H."/>
            <person name="Fukushi H."/>
            <person name="Hattori M."/>
            <person name="Kuhara S."/>
            <person name="Shirai M."/>
        </authorList>
    </citation>
    <scope>NUCLEOTIDE SEQUENCE [LARGE SCALE GENOMIC DNA]</scope>
    <source>
        <strain>Fe/C-56</strain>
    </source>
</reference>
<evidence type="ECO:0000250" key="1"/>
<evidence type="ECO:0000255" key="2">
    <source>
        <dbReference type="HAMAP-Rule" id="MF_00118"/>
    </source>
</evidence>
<organism>
    <name type="scientific">Chlamydia felis (strain Fe/C-56)</name>
    <name type="common">Chlamydophila felis</name>
    <dbReference type="NCBI Taxonomy" id="264202"/>
    <lineage>
        <taxon>Bacteria</taxon>
        <taxon>Pseudomonadati</taxon>
        <taxon>Chlamydiota</taxon>
        <taxon>Chlamydiia</taxon>
        <taxon>Chlamydiales</taxon>
        <taxon>Chlamydiaceae</taxon>
        <taxon>Chlamydia/Chlamydophila group</taxon>
        <taxon>Chlamydia</taxon>
    </lineage>
</organism>
<accession>Q255F3</accession>
<keyword id="KW-0963">Cytoplasm</keyword>
<keyword id="KW-0251">Elongation factor</keyword>
<keyword id="KW-0342">GTP-binding</keyword>
<keyword id="KW-0378">Hydrolase</keyword>
<keyword id="KW-0460">Magnesium</keyword>
<keyword id="KW-0479">Metal-binding</keyword>
<keyword id="KW-0547">Nucleotide-binding</keyword>
<keyword id="KW-0648">Protein biosynthesis</keyword>